<evidence type="ECO:0000250" key="1">
    <source>
        <dbReference type="UniProtKB" id="P28523"/>
    </source>
</evidence>
<evidence type="ECO:0000255" key="2"/>
<evidence type="ECO:0000255" key="3">
    <source>
        <dbReference type="PROSITE-ProRule" id="PRU00114"/>
    </source>
</evidence>
<evidence type="ECO:0000255" key="4">
    <source>
        <dbReference type="PROSITE-ProRule" id="PRU00159"/>
    </source>
</evidence>
<evidence type="ECO:0000255" key="5">
    <source>
        <dbReference type="PROSITE-ProRule" id="PRU00316"/>
    </source>
</evidence>
<evidence type="ECO:0000255" key="6">
    <source>
        <dbReference type="PROSITE-ProRule" id="PRU10027"/>
    </source>
</evidence>
<evidence type="ECO:0000256" key="7">
    <source>
        <dbReference type="SAM" id="MobiDB-lite"/>
    </source>
</evidence>
<evidence type="ECO:0000269" key="8">
    <source>
    </source>
</evidence>
<evidence type="ECO:0000269" key="9">
    <source>
    </source>
</evidence>
<evidence type="ECO:0000269" key="10">
    <source>
    </source>
</evidence>
<evidence type="ECO:0000269" key="11">
    <source>
    </source>
</evidence>
<evidence type="ECO:0000269" key="12">
    <source>
    </source>
</evidence>
<evidence type="ECO:0000269" key="13">
    <source>
    </source>
</evidence>
<evidence type="ECO:0000269" key="14">
    <source>
    </source>
</evidence>
<evidence type="ECO:0000269" key="15">
    <source>
    </source>
</evidence>
<evidence type="ECO:0000269" key="16">
    <source>
    </source>
</evidence>
<evidence type="ECO:0000303" key="17">
    <source>
    </source>
</evidence>
<evidence type="ECO:0000303" key="18">
    <source>
    </source>
</evidence>
<evidence type="ECO:0000303" key="19">
    <source>
    </source>
</evidence>
<evidence type="ECO:0000303" key="20">
    <source>
    </source>
</evidence>
<evidence type="ECO:0000305" key="21"/>
<evidence type="ECO:0000312" key="22">
    <source>
        <dbReference type="EMBL" id="CAA33463.1"/>
    </source>
</evidence>
<evidence type="ECO:0000312" key="23">
    <source>
        <dbReference type="EMBL" id="CAA98065.2"/>
    </source>
</evidence>
<evidence type="ECO:0000312" key="24">
    <source>
        <dbReference type="WormBase" id="ZK617.1b"/>
    </source>
</evidence>
<evidence type="ECO:0007829" key="25">
    <source>
        <dbReference type="PDB" id="1WIT"/>
    </source>
</evidence>
<evidence type="ECO:0007829" key="26">
    <source>
        <dbReference type="PDB" id="1WIU"/>
    </source>
</evidence>
<evidence type="ECO:0007829" key="27">
    <source>
        <dbReference type="PDB" id="3UTO"/>
    </source>
</evidence>
<gene>
    <name evidence="24" type="primary">unc-22</name>
    <name type="ORF">ZK617.1</name>
</gene>
<accession>Q23551</accession>
<accession>A3RMU0</accession>
<accession>D3YT57</accession>
<accession>D3YT58</accession>
<accession>Q23020</accession>
<accession>Q23550</accession>
<accession>Q27232</accession>
<accession>Q7JN85</accession>
<protein>
    <recommendedName>
        <fullName evidence="18">Twitchin</fullName>
        <ecNumber evidence="9">2.7.11.1</ecNumber>
    </recommendedName>
    <alternativeName>
        <fullName evidence="17">Uncoordinated protein 22</fullName>
    </alternativeName>
</protein>
<proteinExistence type="evidence at protein level"/>
<feature type="chain" id="PRO_0000404604" description="Twitchin">
    <location>
        <begin position="1"/>
        <end position="7158"/>
    </location>
</feature>
<feature type="domain" description="Ig-like 1" evidence="2">
    <location>
        <begin position="5"/>
        <end position="97"/>
    </location>
</feature>
<feature type="domain" description="Ig-like 2" evidence="2">
    <location>
        <begin position="111"/>
        <end position="204"/>
    </location>
</feature>
<feature type="domain" description="Ig-like 3" evidence="2">
    <location>
        <begin position="377"/>
        <end position="466"/>
    </location>
</feature>
<feature type="repeat" description="Kelch 1" evidence="2">
    <location>
        <begin position="718"/>
        <end position="764"/>
    </location>
</feature>
<feature type="domain" description="Ig-like 4" evidence="2">
    <location>
        <begin position="980"/>
        <end position="1072"/>
    </location>
</feature>
<feature type="domain" description="Ig-like 5" evidence="2">
    <location>
        <begin position="1122"/>
        <end position="1213"/>
    </location>
</feature>
<feature type="domain" description="Ig-like 6" evidence="2">
    <location>
        <begin position="1217"/>
        <end position="1306"/>
    </location>
</feature>
<feature type="domain" description="Ig-like 7" evidence="2">
    <location>
        <begin position="1312"/>
        <end position="1398"/>
    </location>
</feature>
<feature type="domain" description="Fibronectin type-III 1" evidence="5">
    <location>
        <begin position="1598"/>
        <end position="1690"/>
    </location>
</feature>
<feature type="domain" description="Fibronectin type-III 2" evidence="5">
    <location>
        <begin position="1696"/>
        <end position="1791"/>
    </location>
</feature>
<feature type="domain" description="Fibronectin type-III 3" evidence="5">
    <location>
        <begin position="1891"/>
        <end position="1988"/>
    </location>
</feature>
<feature type="domain" description="Fibronectin type-III 4" evidence="5">
    <location>
        <begin position="1994"/>
        <end position="2087"/>
    </location>
</feature>
<feature type="repeat" description="Kelch 2" evidence="2">
    <location>
        <begin position="2014"/>
        <end position="2058"/>
    </location>
</feature>
<feature type="domain" description="Ig-like 8" evidence="2">
    <location>
        <begin position="2086"/>
        <end position="2181"/>
    </location>
</feature>
<feature type="domain" description="Fibronectin type-III 5" evidence="5">
    <location>
        <begin position="2189"/>
        <end position="2282"/>
    </location>
</feature>
<feature type="repeat" description="Kelch 3" evidence="2">
    <location>
        <begin position="2207"/>
        <end position="2253"/>
    </location>
</feature>
<feature type="domain" description="Fibronectin type-III 6" evidence="5">
    <location>
        <begin position="2288"/>
        <end position="2383"/>
    </location>
</feature>
<feature type="domain" description="Fibronectin type-III 7" evidence="5">
    <location>
        <begin position="2483"/>
        <end position="2576"/>
    </location>
</feature>
<feature type="repeat" description="Kelch 4" evidence="2">
    <location>
        <begin position="2502"/>
        <end position="2547"/>
    </location>
</feature>
<feature type="domain" description="Fibronectin type-III 8" evidence="5">
    <location>
        <begin position="2579"/>
        <end position="2675"/>
    </location>
</feature>
<feature type="domain" description="Ig-like 9" evidence="2">
    <location>
        <begin position="2679"/>
        <end position="2763"/>
    </location>
</feature>
<feature type="domain" description="Fibronectin type-III 9" evidence="5">
    <location>
        <begin position="2775"/>
        <end position="2868"/>
    </location>
</feature>
<feature type="repeat" description="Kelch 5" evidence="2">
    <location>
        <begin position="2793"/>
        <end position="2839"/>
    </location>
</feature>
<feature type="domain" description="Fibronectin type-III 10" evidence="5">
    <location>
        <begin position="2874"/>
        <end position="2968"/>
    </location>
</feature>
<feature type="domain" description="Ig-like 10" evidence="2">
    <location>
        <begin position="2972"/>
        <end position="3062"/>
    </location>
</feature>
<feature type="domain" description="Fibronectin type-III 11" evidence="5">
    <location>
        <begin position="3070"/>
        <end position="3165"/>
    </location>
</feature>
<feature type="repeat" description="Kelch 6" evidence="2">
    <location>
        <begin position="3089"/>
        <end position="3134"/>
    </location>
</feature>
<feature type="domain" description="Fibronectin type-III 12" evidence="5">
    <location>
        <begin position="3171"/>
        <end position="3265"/>
    </location>
</feature>
<feature type="domain" description="Ig-like 11" evidence="2">
    <location>
        <begin position="3268"/>
        <end position="3358"/>
    </location>
</feature>
<feature type="domain" description="Fibronectin type-III 13" evidence="5">
    <location>
        <begin position="3365"/>
        <end position="3459"/>
    </location>
</feature>
<feature type="repeat" description="Kelch 7" evidence="2">
    <location>
        <begin position="3384"/>
        <end position="3430"/>
    </location>
</feature>
<feature type="domain" description="Fibronectin type-III 14" evidence="5">
    <location>
        <begin position="3465"/>
        <end position="3559"/>
    </location>
</feature>
<feature type="domain" description="Ig-like 12" evidence="2">
    <location>
        <begin position="3563"/>
        <end position="3653"/>
    </location>
</feature>
<feature type="domain" description="Fibronectin type-III 15" evidence="5">
    <location>
        <begin position="3661"/>
        <end position="3753"/>
    </location>
</feature>
<feature type="domain" description="Fibronectin type-III 16" evidence="5">
    <location>
        <begin position="3759"/>
        <end position="3853"/>
    </location>
</feature>
<feature type="domain" description="Fibronectin type-III 17" evidence="5">
    <location>
        <begin position="3954"/>
        <end position="4047"/>
    </location>
</feature>
<feature type="repeat" description="Kelch 8" evidence="2">
    <location>
        <begin position="3972"/>
        <end position="4018"/>
    </location>
</feature>
<feature type="domain" description="Fibronectin type-III 18" evidence="5">
    <location>
        <begin position="4053"/>
        <end position="4146"/>
    </location>
</feature>
<feature type="domain" description="Fibronectin type-III 19" evidence="5">
    <location>
        <begin position="4246"/>
        <end position="4340"/>
    </location>
</feature>
<feature type="repeat" description="Kelch 9" evidence="2">
    <location>
        <begin position="4265"/>
        <end position="4310"/>
    </location>
</feature>
<feature type="domain" description="Fibronectin type-III 20" evidence="5">
    <location>
        <begin position="4346"/>
        <end position="4440"/>
    </location>
</feature>
<feature type="repeat" description="Kelch 10" evidence="2">
    <location>
        <begin position="4365"/>
        <end position="4410"/>
    </location>
</feature>
<feature type="domain" description="Ig-like 13" evidence="2">
    <location>
        <begin position="4445"/>
        <end position="4531"/>
    </location>
</feature>
<feature type="domain" description="Fibronectin type-III 21" evidence="5">
    <location>
        <begin position="4538"/>
        <end position="4631"/>
    </location>
</feature>
<feature type="repeat" description="Kelch 11" evidence="2">
    <location>
        <begin position="4557"/>
        <end position="4602"/>
    </location>
</feature>
<feature type="domain" description="Fibronectin type-III 22" evidence="5">
    <location>
        <begin position="4637"/>
        <end position="4733"/>
    </location>
</feature>
<feature type="domain" description="Fibronectin type-III 23" evidence="5">
    <location>
        <begin position="4739"/>
        <end position="4834"/>
    </location>
</feature>
<feature type="domain" description="Fibronectin type-III 24" evidence="5">
    <location>
        <begin position="4936"/>
        <end position="5028"/>
    </location>
</feature>
<feature type="domain" description="Fibronectin type-III 25" evidence="5">
    <location>
        <begin position="5034"/>
        <end position="5129"/>
    </location>
</feature>
<feature type="domain" description="Fibronectin type-III 26" evidence="5">
    <location>
        <begin position="5231"/>
        <end position="5326"/>
    </location>
</feature>
<feature type="repeat" description="Kelch 12" evidence="2">
    <location>
        <begin position="5287"/>
        <end position="5335"/>
    </location>
</feature>
<feature type="domain" description="Fibronectin type-III 27" evidence="5">
    <location>
        <begin position="5333"/>
        <end position="5427"/>
    </location>
</feature>
<feature type="domain" description="Fibronectin type-III 28" evidence="5">
    <location>
        <begin position="5430"/>
        <end position="5528"/>
    </location>
</feature>
<feature type="domain" description="Ig-like 14" evidence="2">
    <location>
        <begin position="5533"/>
        <end position="5621"/>
    </location>
</feature>
<feature type="domain" description="Fibronectin type-III 29" evidence="5">
    <location>
        <begin position="5723"/>
        <end position="5817"/>
    </location>
</feature>
<feature type="repeat" description="Kelch 13" evidence="2">
    <location>
        <begin position="5742"/>
        <end position="5787"/>
    </location>
</feature>
<feature type="domain" description="Fibronectin type-III 30" evidence="5">
    <location>
        <begin position="5823"/>
        <end position="5919"/>
    </location>
</feature>
<feature type="domain" description="Ig-like 15" evidence="2">
    <location>
        <begin position="5923"/>
        <end position="6011"/>
    </location>
</feature>
<feature type="domain" description="Ig-like 16" evidence="2">
    <location>
        <begin position="6016"/>
        <end position="6107"/>
    </location>
</feature>
<feature type="domain" description="Fibronectin type-III 31" evidence="5">
    <location>
        <begin position="6114"/>
        <end position="6207"/>
    </location>
</feature>
<feature type="domain" description="Protein kinase" evidence="4">
    <location>
        <begin position="6261"/>
        <end position="6516"/>
    </location>
</feature>
<feature type="domain" description="Ig-like 17" evidence="2">
    <location>
        <begin position="6585"/>
        <end position="6673"/>
    </location>
</feature>
<feature type="domain" description="Ig-like 18" evidence="2">
    <location>
        <begin position="6696"/>
        <end position="6795"/>
    </location>
</feature>
<feature type="domain" description="Ig-like 19" evidence="2">
    <location>
        <begin position="6863"/>
        <end position="6952"/>
    </location>
</feature>
<feature type="domain" description="Ig-like 20" evidence="2">
    <location>
        <begin position="6958"/>
        <end position="7059"/>
    </location>
</feature>
<feature type="domain" description="Ig-like 21" evidence="2">
    <location>
        <begin position="7067"/>
        <end position="7149"/>
    </location>
</feature>
<feature type="region of interest" description="Disordered" evidence="7">
    <location>
        <begin position="204"/>
        <end position="381"/>
    </location>
</feature>
<feature type="region of interest" description="Disordered" evidence="7">
    <location>
        <begin position="473"/>
        <end position="639"/>
    </location>
</feature>
<feature type="region of interest" description="Disordered" evidence="7">
    <location>
        <begin position="658"/>
        <end position="732"/>
    </location>
</feature>
<feature type="region of interest" description="Disordered" evidence="7">
    <location>
        <begin position="763"/>
        <end position="955"/>
    </location>
</feature>
<feature type="region of interest" description="Disordered" evidence="7">
    <location>
        <begin position="1088"/>
        <end position="1118"/>
    </location>
</feature>
<feature type="region of interest" description="Disordered" evidence="7">
    <location>
        <begin position="2266"/>
        <end position="2295"/>
    </location>
</feature>
<feature type="region of interest" description="Disordered" evidence="7">
    <location>
        <begin position="2849"/>
        <end position="2901"/>
    </location>
</feature>
<feature type="region of interest" description="C-terminal regulatory domain (CDR)" evidence="19">
    <location>
        <begin position="6517"/>
        <end position="6581"/>
    </location>
</feature>
<feature type="compositionally biased region" description="Low complexity" evidence="7">
    <location>
        <begin position="220"/>
        <end position="238"/>
    </location>
</feature>
<feature type="compositionally biased region" description="Basic and acidic residues" evidence="7">
    <location>
        <begin position="242"/>
        <end position="259"/>
    </location>
</feature>
<feature type="compositionally biased region" description="Basic and acidic residues" evidence="7">
    <location>
        <begin position="279"/>
        <end position="291"/>
    </location>
</feature>
<feature type="compositionally biased region" description="Low complexity" evidence="7">
    <location>
        <begin position="319"/>
        <end position="340"/>
    </location>
</feature>
<feature type="compositionally biased region" description="Low complexity" evidence="7">
    <location>
        <begin position="347"/>
        <end position="368"/>
    </location>
</feature>
<feature type="compositionally biased region" description="Basic residues" evidence="7">
    <location>
        <begin position="504"/>
        <end position="513"/>
    </location>
</feature>
<feature type="compositionally biased region" description="Low complexity" evidence="7">
    <location>
        <begin position="514"/>
        <end position="523"/>
    </location>
</feature>
<feature type="compositionally biased region" description="Basic and acidic residues" evidence="7">
    <location>
        <begin position="529"/>
        <end position="540"/>
    </location>
</feature>
<feature type="compositionally biased region" description="Basic and acidic residues" evidence="7">
    <location>
        <begin position="601"/>
        <end position="618"/>
    </location>
</feature>
<feature type="compositionally biased region" description="Low complexity" evidence="7">
    <location>
        <begin position="620"/>
        <end position="630"/>
    </location>
</feature>
<feature type="compositionally biased region" description="Basic and acidic residues" evidence="7">
    <location>
        <begin position="763"/>
        <end position="813"/>
    </location>
</feature>
<feature type="compositionally biased region" description="Basic and acidic residues" evidence="7">
    <location>
        <begin position="837"/>
        <end position="850"/>
    </location>
</feature>
<feature type="compositionally biased region" description="Basic and acidic residues" evidence="7">
    <location>
        <begin position="885"/>
        <end position="897"/>
    </location>
</feature>
<feature type="compositionally biased region" description="Basic and acidic residues" evidence="7">
    <location>
        <begin position="917"/>
        <end position="955"/>
    </location>
</feature>
<feature type="compositionally biased region" description="Basic and acidic residues" evidence="7">
    <location>
        <begin position="1106"/>
        <end position="1118"/>
    </location>
</feature>
<feature type="compositionally biased region" description="Basic and acidic residues" evidence="7">
    <location>
        <begin position="2266"/>
        <end position="2287"/>
    </location>
</feature>
<feature type="compositionally biased region" description="Basic and acidic residues" evidence="7">
    <location>
        <begin position="2868"/>
        <end position="2892"/>
    </location>
</feature>
<feature type="active site" description="Proton acceptor" evidence="1 4 6">
    <location>
        <position position="6382"/>
    </location>
</feature>
<feature type="binding site" evidence="1 4">
    <location>
        <begin position="6267"/>
        <end position="6275"/>
    </location>
    <ligand>
        <name>ATP</name>
        <dbReference type="ChEBI" id="CHEBI:30616"/>
    </ligand>
</feature>
<feature type="binding site" evidence="1 4">
    <location>
        <position position="6290"/>
    </location>
    <ligand>
        <name>ATP</name>
        <dbReference type="ChEBI" id="CHEBI:30616"/>
    </ligand>
</feature>
<feature type="disulfide bond" evidence="3">
    <location>
        <begin position="25"/>
        <end position="81"/>
    </location>
</feature>
<feature type="disulfide bond" evidence="3">
    <location>
        <begin position="132"/>
        <end position="188"/>
    </location>
</feature>
<feature type="disulfide bond" evidence="3">
    <location>
        <begin position="1150"/>
        <end position="1201"/>
    </location>
</feature>
<feature type="disulfide bond" evidence="3">
    <location>
        <begin position="5944"/>
        <end position="5995"/>
    </location>
</feature>
<feature type="splice variant" id="VSP_040605" description="In isoform e." evidence="20">
    <location>
        <begin position="1"/>
        <end position="610"/>
    </location>
</feature>
<feature type="splice variant" id="VSP_040606" description="In isoform c." evidence="20">
    <location>
        <begin position="1"/>
        <end position="539"/>
    </location>
</feature>
<feature type="splice variant" id="VSP_040607" description="In isoform c." evidence="20">
    <original>RSSSVRPDPDE</original>
    <variation>MGQDFDSDSDS</variation>
    <location>
        <begin position="540"/>
        <end position="550"/>
    </location>
</feature>
<feature type="splice variant" id="VSP_040608" description="In isoform d." evidence="20">
    <original>ESQLDEIPSSGLTIPEERRRELLGQVGESDDEVSESISELPSFAGGKPRRKTDSPPKQDDMFSRDTLLRKTTTSTKNESSTVEEKTKLRKTVKKVDGELDFKAMVKLKKVKKEEGGTTEKSGFPLDHADSTSSVLSQESRSRRGSNAPFAKDGLPEQPANPFAQLKKVKSGAGGLEKSDSMASLKKLDLKKGKIDDNSDGAFKVQLKKVVKKEVKESTISVKEKNGTESGIKTEFKMEKRERTTLQKYEKTDSDGSKKE</original>
    <variation>NLLKKSASNDGSDHGASPSSSTSSSSRRLPPRPPLESSHSASSPSSSNGGPRRMFNLRSASDRQGASRPTGGQTPNPLNMRSANSSGQDLHKISQIHAFILSKMPEGEAKERFLRSILDLEGPDSRRGSRDDVGSPNMLKKTNSKSSVNSSSNESQLDEIPSSGLTIPEERRRELLGQVGESDDEVSESISELPSFAGGKPRRKTD</variation>
    <location>
        <begin position="551"/>
        <end position="809"/>
    </location>
</feature>
<feature type="splice variant" id="VSP_040609" description="In isoform a." evidence="17 20">
    <location>
        <begin position="604"/>
        <end position="809"/>
    </location>
</feature>
<feature type="splice variant" id="VSP_040611" description="In isoform a, isoform d and isoform e." evidence="17 20">
    <location>
        <begin position="835"/>
        <end position="947"/>
    </location>
</feature>
<feature type="strand" evidence="25">
    <location>
        <begin position="4158"/>
        <end position="4161"/>
    </location>
</feature>
<feature type="strand" evidence="26">
    <location>
        <begin position="4163"/>
        <end position="4165"/>
    </location>
</feature>
<feature type="strand" evidence="25">
    <location>
        <begin position="4168"/>
        <end position="4174"/>
    </location>
</feature>
<feature type="strand" evidence="25">
    <location>
        <begin position="4180"/>
        <end position="4184"/>
    </location>
</feature>
<feature type="turn" evidence="25">
    <location>
        <begin position="4187"/>
        <end position="4189"/>
    </location>
</feature>
<feature type="strand" evidence="25">
    <location>
        <begin position="4196"/>
        <end position="4201"/>
    </location>
</feature>
<feature type="strand" evidence="25">
    <location>
        <begin position="4204"/>
        <end position="4208"/>
    </location>
</feature>
<feature type="helix" evidence="25">
    <location>
        <begin position="4214"/>
        <end position="4216"/>
    </location>
</feature>
<feature type="strand" evidence="25">
    <location>
        <begin position="4218"/>
        <end position="4226"/>
    </location>
</feature>
<feature type="strand" evidence="25">
    <location>
        <begin position="4229"/>
        <end position="4239"/>
    </location>
</feature>
<feature type="strand" evidence="27">
    <location>
        <begin position="6116"/>
        <end position="6123"/>
    </location>
</feature>
<feature type="strand" evidence="27">
    <location>
        <begin position="6128"/>
        <end position="6133"/>
    </location>
</feature>
<feature type="strand" evidence="27">
    <location>
        <begin position="6139"/>
        <end position="6141"/>
    </location>
</feature>
<feature type="strand" evidence="27">
    <location>
        <begin position="6145"/>
        <end position="6155"/>
    </location>
</feature>
<feature type="strand" evidence="27">
    <location>
        <begin position="6159"/>
        <end position="6171"/>
    </location>
</feature>
<feature type="strand" evidence="27">
    <location>
        <begin position="6179"/>
        <end position="6188"/>
    </location>
</feature>
<feature type="helix" evidence="27">
    <location>
        <begin position="6206"/>
        <end position="6208"/>
    </location>
</feature>
<feature type="strand" evidence="27">
    <location>
        <begin position="6219"/>
        <end position="6221"/>
    </location>
</feature>
<feature type="helix" evidence="27">
    <location>
        <begin position="6234"/>
        <end position="6237"/>
    </location>
</feature>
<feature type="helix" evidence="27">
    <location>
        <begin position="6241"/>
        <end position="6244"/>
    </location>
</feature>
<feature type="strand" evidence="27">
    <location>
        <begin position="6253"/>
        <end position="6255"/>
    </location>
</feature>
<feature type="helix" evidence="27">
    <location>
        <begin position="6257"/>
        <end position="6259"/>
    </location>
</feature>
<feature type="strand" evidence="27">
    <location>
        <begin position="6261"/>
        <end position="6270"/>
    </location>
</feature>
<feature type="strand" evidence="27">
    <location>
        <begin position="6273"/>
        <end position="6280"/>
    </location>
</feature>
<feature type="turn" evidence="27">
    <location>
        <begin position="6281"/>
        <end position="6283"/>
    </location>
</feature>
<feature type="strand" evidence="27">
    <location>
        <begin position="6286"/>
        <end position="6293"/>
    </location>
</feature>
<feature type="helix" evidence="27">
    <location>
        <begin position="6297"/>
        <end position="6312"/>
    </location>
</feature>
<feature type="strand" evidence="27">
    <location>
        <begin position="6321"/>
        <end position="6326"/>
    </location>
</feature>
<feature type="strand" evidence="27">
    <location>
        <begin position="6328"/>
        <end position="6336"/>
    </location>
</feature>
<feature type="helix" evidence="27">
    <location>
        <begin position="6343"/>
        <end position="6347"/>
    </location>
</feature>
<feature type="helix" evidence="27">
    <location>
        <begin position="6356"/>
        <end position="6375"/>
    </location>
</feature>
<feature type="helix" evidence="27">
    <location>
        <begin position="6385"/>
        <end position="6387"/>
    </location>
</feature>
<feature type="strand" evidence="27">
    <location>
        <begin position="6388"/>
        <end position="6394"/>
    </location>
</feature>
<feature type="strand" evidence="27">
    <location>
        <begin position="6398"/>
        <end position="6400"/>
    </location>
</feature>
<feature type="strand" evidence="27">
    <location>
        <begin position="6413"/>
        <end position="6418"/>
    </location>
</feature>
<feature type="helix" evidence="27">
    <location>
        <begin position="6422"/>
        <end position="6424"/>
    </location>
</feature>
<feature type="helix" evidence="27">
    <location>
        <begin position="6427"/>
        <end position="6430"/>
    </location>
</feature>
<feature type="helix" evidence="27">
    <location>
        <begin position="6437"/>
        <end position="6453"/>
    </location>
</feature>
<feature type="helix" evidence="27">
    <location>
        <begin position="6463"/>
        <end position="6471"/>
    </location>
</feature>
<feature type="helix" evidence="27">
    <location>
        <begin position="6480"/>
        <end position="6482"/>
    </location>
</feature>
<feature type="helix" evidence="27">
    <location>
        <begin position="6487"/>
        <end position="6494"/>
    </location>
</feature>
<feature type="helix" evidence="27">
    <location>
        <begin position="6501"/>
        <end position="6503"/>
    </location>
</feature>
<feature type="helix" evidence="27">
    <location>
        <begin position="6507"/>
        <end position="6512"/>
    </location>
</feature>
<feature type="turn" evidence="27">
    <location>
        <begin position="6514"/>
        <end position="6516"/>
    </location>
</feature>
<feature type="turn" evidence="27">
    <location>
        <begin position="6522"/>
        <end position="6525"/>
    </location>
</feature>
<feature type="helix" evidence="27">
    <location>
        <begin position="6530"/>
        <end position="6533"/>
    </location>
</feature>
<feature type="helix" evidence="27">
    <location>
        <begin position="6534"/>
        <end position="6543"/>
    </location>
</feature>
<feature type="turn" evidence="27">
    <location>
        <begin position="6544"/>
        <end position="6546"/>
    </location>
</feature>
<feature type="helix" evidence="27">
    <location>
        <begin position="6553"/>
        <end position="6559"/>
    </location>
</feature>
<feature type="helix" evidence="27">
    <location>
        <begin position="6562"/>
        <end position="6566"/>
    </location>
</feature>
<feature type="turn" evidence="27">
    <location>
        <begin position="6568"/>
        <end position="6572"/>
    </location>
</feature>
<feature type="strand" evidence="27">
    <location>
        <begin position="6573"/>
        <end position="6578"/>
    </location>
</feature>
<feature type="helix" evidence="27">
    <location>
        <begin position="6580"/>
        <end position="6583"/>
    </location>
</feature>
<feature type="strand" evidence="27">
    <location>
        <begin position="6586"/>
        <end position="6589"/>
    </location>
</feature>
<feature type="strand" evidence="27">
    <location>
        <begin position="6594"/>
        <end position="6597"/>
    </location>
</feature>
<feature type="strand" evidence="27">
    <location>
        <begin position="6602"/>
        <end position="6609"/>
    </location>
</feature>
<feature type="strand" evidence="27">
    <location>
        <begin position="6615"/>
        <end position="6620"/>
    </location>
</feature>
<feature type="strand" evidence="27">
    <location>
        <begin position="6627"/>
        <end position="6636"/>
    </location>
</feature>
<feature type="strand" evidence="27">
    <location>
        <begin position="6639"/>
        <end position="6644"/>
    </location>
</feature>
<feature type="helix" evidence="27">
    <location>
        <begin position="6649"/>
        <end position="6651"/>
    </location>
</feature>
<feature type="strand" evidence="27">
    <location>
        <begin position="6653"/>
        <end position="6661"/>
    </location>
</feature>
<feature type="strand" evidence="27">
    <location>
        <begin position="6664"/>
        <end position="6675"/>
    </location>
</feature>
<organism>
    <name type="scientific">Caenorhabditis elegans</name>
    <dbReference type="NCBI Taxonomy" id="6239"/>
    <lineage>
        <taxon>Eukaryota</taxon>
        <taxon>Metazoa</taxon>
        <taxon>Ecdysozoa</taxon>
        <taxon>Nematoda</taxon>
        <taxon>Chromadorea</taxon>
        <taxon>Rhabditida</taxon>
        <taxon>Rhabditina</taxon>
        <taxon>Rhabditomorpha</taxon>
        <taxon>Rhabditoidea</taxon>
        <taxon>Rhabditidae</taxon>
        <taxon>Peloderinae</taxon>
        <taxon>Caenorhabditis</taxon>
    </lineage>
</organism>
<dbReference type="EC" id="2.7.11.1" evidence="9"/>
<dbReference type="EMBL" id="X15423">
    <property type="protein sequence ID" value="CAA33463.1"/>
    <property type="status" value="ALT_SEQ"/>
    <property type="molecule type" value="Genomic_DNA"/>
</dbReference>
<dbReference type="EMBL" id="Z73897">
    <property type="protein sequence ID" value="CAA98064.2"/>
    <property type="molecule type" value="Genomic_DNA"/>
</dbReference>
<dbReference type="EMBL" id="Z73899">
    <property type="protein sequence ID" value="CAA98064.2"/>
    <property type="status" value="JOINED"/>
    <property type="molecule type" value="Genomic_DNA"/>
</dbReference>
<dbReference type="EMBL" id="Z73897">
    <property type="protein sequence ID" value="CAA98065.2"/>
    <property type="molecule type" value="Genomic_DNA"/>
</dbReference>
<dbReference type="EMBL" id="Z73899">
    <property type="protein sequence ID" value="CAA98065.2"/>
    <property type="status" value="JOINED"/>
    <property type="molecule type" value="Genomic_DNA"/>
</dbReference>
<dbReference type="EMBL" id="Z73897">
    <property type="protein sequence ID" value="CAM35838.2"/>
    <property type="molecule type" value="Genomic_DNA"/>
</dbReference>
<dbReference type="EMBL" id="Z73899">
    <property type="protein sequence ID" value="CAM35838.2"/>
    <property type="status" value="JOINED"/>
    <property type="molecule type" value="Genomic_DNA"/>
</dbReference>
<dbReference type="EMBL" id="Z73897">
    <property type="protein sequence ID" value="CBK19522.1"/>
    <property type="molecule type" value="Genomic_DNA"/>
</dbReference>
<dbReference type="EMBL" id="Z73899">
    <property type="protein sequence ID" value="CBK19522.1"/>
    <property type="status" value="JOINED"/>
    <property type="molecule type" value="Genomic_DNA"/>
</dbReference>
<dbReference type="EMBL" id="Z73897">
    <property type="protein sequence ID" value="CBK19523.1"/>
    <property type="molecule type" value="Genomic_DNA"/>
</dbReference>
<dbReference type="EMBL" id="Z73899">
    <property type="protein sequence ID" value="CBK19523.1"/>
    <property type="status" value="JOINED"/>
    <property type="molecule type" value="Genomic_DNA"/>
</dbReference>
<dbReference type="PIR" id="A88852">
    <property type="entry name" value="A88852"/>
</dbReference>
<dbReference type="PIR" id="S57242">
    <property type="entry name" value="S57242"/>
</dbReference>
<dbReference type="PIR" id="T27935">
    <property type="entry name" value="T27935"/>
</dbReference>
<dbReference type="RefSeq" id="NP_001122835.2">
    <molecule id="Q23551-3"/>
    <property type="nucleotide sequence ID" value="NM_001129363.4"/>
</dbReference>
<dbReference type="RefSeq" id="NP_001255603.2">
    <property type="nucleotide sequence ID" value="NM_001268674.2"/>
</dbReference>
<dbReference type="RefSeq" id="NP_001255604.1">
    <molecule id="Q23551-5"/>
    <property type="nucleotide sequence ID" value="NM_001268675.3"/>
</dbReference>
<dbReference type="RefSeq" id="NP_502273.2">
    <molecule id="Q23551-2"/>
    <property type="nucleotide sequence ID" value="NM_069872.5"/>
</dbReference>
<dbReference type="RefSeq" id="NP_502274.2">
    <molecule id="Q23551-1"/>
    <property type="nucleotide sequence ID" value="NM_069873.4"/>
</dbReference>
<dbReference type="PDB" id="1KOA">
    <property type="method" value="X-ray"/>
    <property type="resolution" value="3.30 A"/>
    <property type="chains" value="A=6209-6699"/>
</dbReference>
<dbReference type="PDB" id="1WIT">
    <property type="method" value="NMR"/>
    <property type="chains" value="A=4148-4240"/>
</dbReference>
<dbReference type="PDB" id="1WIU">
    <property type="method" value="NMR"/>
    <property type="chains" value="A=4148-4240"/>
</dbReference>
<dbReference type="PDB" id="3UTO">
    <property type="method" value="X-ray"/>
    <property type="resolution" value="2.40 A"/>
    <property type="chains" value="A/B=6108-6675"/>
</dbReference>
<dbReference type="PDBsum" id="1KOA"/>
<dbReference type="PDBsum" id="1WIT"/>
<dbReference type="PDBsum" id="1WIU"/>
<dbReference type="PDBsum" id="3UTO"/>
<dbReference type="SMR" id="Q23551"/>
<dbReference type="BioGRID" id="43229">
    <property type="interactions" value="6"/>
</dbReference>
<dbReference type="FunCoup" id="Q23551">
    <property type="interactions" value="48"/>
</dbReference>
<dbReference type="STRING" id="6239.ZK617.1b.1"/>
<dbReference type="PaxDb" id="6239-ZK617.1b.1"/>
<dbReference type="PeptideAtlas" id="Q23551"/>
<dbReference type="EnsemblMetazoa" id="ZK617.1a.1">
    <molecule id="Q23551-2"/>
    <property type="protein sequence ID" value="ZK617.1a.1"/>
    <property type="gene ID" value="WBGene00006759"/>
</dbReference>
<dbReference type="EnsemblMetazoa" id="ZK617.1b.1">
    <molecule id="Q23551-1"/>
    <property type="protein sequence ID" value="ZK617.1b.1"/>
    <property type="gene ID" value="WBGene00006759"/>
</dbReference>
<dbReference type="EnsemblMetazoa" id="ZK617.1c.1">
    <molecule id="Q23551-3"/>
    <property type="protein sequence ID" value="ZK617.1c.1"/>
    <property type="gene ID" value="WBGene00006759"/>
</dbReference>
<dbReference type="EnsemblMetazoa" id="ZK617.1d.1">
    <property type="protein sequence ID" value="ZK617.1d.1"/>
    <property type="gene ID" value="WBGene00006759"/>
</dbReference>
<dbReference type="EnsemblMetazoa" id="ZK617.1e.1">
    <molecule id="Q23551-5"/>
    <property type="protein sequence ID" value="ZK617.1e.1"/>
    <property type="gene ID" value="WBGene00006759"/>
</dbReference>
<dbReference type="GeneID" id="178135"/>
<dbReference type="KEGG" id="cel:CELE_ZK617.1"/>
<dbReference type="UCSC" id="ZK617.1a.2">
    <property type="organism name" value="c. elegans"/>
</dbReference>
<dbReference type="AGR" id="WB:WBGene00006759"/>
<dbReference type="CTD" id="178135"/>
<dbReference type="WormBase" id="ZK617.1a">
    <molecule id="Q23551-2"/>
    <property type="protein sequence ID" value="CE33017"/>
    <property type="gene ID" value="WBGene00006759"/>
    <property type="gene designation" value="unc-22"/>
</dbReference>
<dbReference type="WormBase" id="ZK617.1b">
    <molecule id="Q23551-1"/>
    <property type="protein sequence ID" value="CE33018"/>
    <property type="gene ID" value="WBGene00006759"/>
    <property type="gene designation" value="unc-22"/>
</dbReference>
<dbReference type="WormBase" id="ZK617.1c">
    <molecule id="Q23551-3"/>
    <property type="protein sequence ID" value="CE47057"/>
    <property type="gene ID" value="WBGene00006759"/>
    <property type="gene designation" value="unc-22"/>
</dbReference>
<dbReference type="WormBase" id="ZK617.1d">
    <property type="protein sequence ID" value="CE49926"/>
    <property type="gene ID" value="WBGene00006759"/>
    <property type="gene designation" value="unc-22"/>
</dbReference>
<dbReference type="WormBase" id="ZK617.1e">
    <molecule id="Q23551-5"/>
    <property type="protein sequence ID" value="CE44668"/>
    <property type="gene ID" value="WBGene00006759"/>
    <property type="gene designation" value="unc-22"/>
</dbReference>
<dbReference type="eggNOG" id="KOG0613">
    <property type="taxonomic scope" value="Eukaryota"/>
</dbReference>
<dbReference type="GeneTree" id="ENSGT00940000169746"/>
<dbReference type="InParanoid" id="Q23551"/>
<dbReference type="OMA" id="YYTDMWS"/>
<dbReference type="OrthoDB" id="504170at2759"/>
<dbReference type="PhylomeDB" id="Q23551"/>
<dbReference type="EvolutionaryTrace" id="Q23551"/>
<dbReference type="PRO" id="PR:Q23551"/>
<dbReference type="Proteomes" id="UP000001940">
    <property type="component" value="Chromosome IV"/>
</dbReference>
<dbReference type="Bgee" id="WBGene00006759">
    <property type="expression patterns" value="Expressed in larva and 3 other cell types or tissues"/>
</dbReference>
<dbReference type="ExpressionAtlas" id="Q23551">
    <property type="expression patterns" value="baseline and differential"/>
</dbReference>
<dbReference type="GO" id="GO:0031672">
    <property type="term" value="C:A band"/>
    <property type="evidence" value="ECO:0000314"/>
    <property type="project" value="WormBase"/>
</dbReference>
<dbReference type="GO" id="GO:0031430">
    <property type="term" value="C:M band"/>
    <property type="evidence" value="ECO:0000318"/>
    <property type="project" value="GO_Central"/>
</dbReference>
<dbReference type="GO" id="GO:0005524">
    <property type="term" value="F:ATP binding"/>
    <property type="evidence" value="ECO:0007669"/>
    <property type="project" value="UniProtKB-KW"/>
</dbReference>
<dbReference type="GO" id="GO:0005516">
    <property type="term" value="F:calmodulin binding"/>
    <property type="evidence" value="ECO:0007669"/>
    <property type="project" value="UniProtKB-KW"/>
</dbReference>
<dbReference type="GO" id="GO:0046872">
    <property type="term" value="F:metal ion binding"/>
    <property type="evidence" value="ECO:0007669"/>
    <property type="project" value="UniProtKB-KW"/>
</dbReference>
<dbReference type="GO" id="GO:0019901">
    <property type="term" value="F:protein kinase binding"/>
    <property type="evidence" value="ECO:0000353"/>
    <property type="project" value="UniProtKB"/>
</dbReference>
<dbReference type="GO" id="GO:0106310">
    <property type="term" value="F:protein serine kinase activity"/>
    <property type="evidence" value="ECO:0007669"/>
    <property type="project" value="RHEA"/>
</dbReference>
<dbReference type="GO" id="GO:0004674">
    <property type="term" value="F:protein serine/threonine kinase activity"/>
    <property type="evidence" value="ECO:0000314"/>
    <property type="project" value="WormBase"/>
</dbReference>
<dbReference type="GO" id="GO:0008344">
    <property type="term" value="P:adult locomotory behavior"/>
    <property type="evidence" value="ECO:0000315"/>
    <property type="project" value="UniProtKB"/>
</dbReference>
<dbReference type="GO" id="GO:0035095">
    <property type="term" value="P:behavioral response to nicotine"/>
    <property type="evidence" value="ECO:0000315"/>
    <property type="project" value="UniProtKB"/>
</dbReference>
<dbReference type="GO" id="GO:0051782">
    <property type="term" value="P:negative regulation of cell division"/>
    <property type="evidence" value="ECO:0000316"/>
    <property type="project" value="UniProtKB"/>
</dbReference>
<dbReference type="GO" id="GO:0040017">
    <property type="term" value="P:positive regulation of locomotion"/>
    <property type="evidence" value="ECO:0000316"/>
    <property type="project" value="UniProtKB"/>
</dbReference>
<dbReference type="GO" id="GO:0060298">
    <property type="term" value="P:positive regulation of sarcomere organization"/>
    <property type="evidence" value="ECO:0000315"/>
    <property type="project" value="UniProtKB"/>
</dbReference>
<dbReference type="GO" id="GO:0045989">
    <property type="term" value="P:positive regulation of striated muscle contraction"/>
    <property type="evidence" value="ECO:0000316"/>
    <property type="project" value="UniProtKB"/>
</dbReference>
<dbReference type="GO" id="GO:0045214">
    <property type="term" value="P:sarcomere organization"/>
    <property type="evidence" value="ECO:0000318"/>
    <property type="project" value="GO_Central"/>
</dbReference>
<dbReference type="CDD" id="cd00063">
    <property type="entry name" value="FN3"/>
    <property type="match status" value="31"/>
</dbReference>
<dbReference type="CDD" id="cd00096">
    <property type="entry name" value="Ig"/>
    <property type="match status" value="7"/>
</dbReference>
<dbReference type="CDD" id="cd05748">
    <property type="entry name" value="Ig_Titin_like"/>
    <property type="match status" value="1"/>
</dbReference>
<dbReference type="CDD" id="cd20949">
    <property type="entry name" value="IgI_Twitchin_like"/>
    <property type="match status" value="1"/>
</dbReference>
<dbReference type="CDD" id="cd14114">
    <property type="entry name" value="STKc_Twitchin_like"/>
    <property type="match status" value="1"/>
</dbReference>
<dbReference type="FunFam" id="1.10.510.10:FF:000321">
    <property type="entry name" value="Bent, isoform C"/>
    <property type="match status" value="1"/>
</dbReference>
<dbReference type="FunFam" id="2.60.40.10:FF:000440">
    <property type="entry name" value="Bent, isoform C"/>
    <property type="match status" value="1"/>
</dbReference>
<dbReference type="FunFam" id="2.60.40.10:FF:001845">
    <property type="entry name" value="Bent, isoform H"/>
    <property type="match status" value="1"/>
</dbReference>
<dbReference type="FunFam" id="2.60.40.10:FF:000460">
    <property type="entry name" value="Bent, isoform J"/>
    <property type="match status" value="1"/>
</dbReference>
<dbReference type="FunFam" id="2.60.40.10:FF:000504">
    <property type="entry name" value="Bent, isoform J"/>
    <property type="match status" value="1"/>
</dbReference>
<dbReference type="FunFam" id="2.60.40.10:FF:000147">
    <property type="entry name" value="Myosin light chain kinase"/>
    <property type="match status" value="1"/>
</dbReference>
<dbReference type="FunFam" id="2.60.40.10:FF:000425">
    <property type="entry name" value="Myosin light chain kinase"/>
    <property type="match status" value="1"/>
</dbReference>
<dbReference type="FunFam" id="2.60.40.10:FF:000107">
    <property type="entry name" value="Myosin, light chain kinase a"/>
    <property type="match status" value="1"/>
</dbReference>
<dbReference type="FunFam" id="2.60.40.10:FF:000031">
    <property type="entry name" value="Myosin-binding protein C, slow type"/>
    <property type="match status" value="3"/>
</dbReference>
<dbReference type="FunFam" id="2.60.40.10:FF:002083">
    <property type="entry name" value="Protein CBR-UNC-22"/>
    <property type="match status" value="2"/>
</dbReference>
<dbReference type="FunFam" id="2.60.40.10:FF:000160">
    <property type="entry name" value="Titin a"/>
    <property type="match status" value="12"/>
</dbReference>
<dbReference type="FunFam" id="2.60.40.10:FF:000003">
    <property type="entry name" value="Titin isoform E"/>
    <property type="match status" value="2"/>
</dbReference>
<dbReference type="FunFam" id="2.60.40.10:FF:000127">
    <property type="entry name" value="titin isoform X1"/>
    <property type="match status" value="1"/>
</dbReference>
<dbReference type="FunFam" id="2.60.40.10:FF:001003">
    <property type="entry name" value="titin isoform X1"/>
    <property type="match status" value="1"/>
</dbReference>
<dbReference type="FunFam" id="2.60.40.10:FF:002226">
    <property type="entry name" value="Twitchin"/>
    <property type="match status" value="1"/>
</dbReference>
<dbReference type="FunFam" id="2.60.40.10:FF:002229">
    <property type="entry name" value="Twitchin"/>
    <property type="match status" value="1"/>
</dbReference>
<dbReference type="FunFam" id="2.60.40.10:FF:002276">
    <property type="entry name" value="Twitchin"/>
    <property type="match status" value="1"/>
</dbReference>
<dbReference type="FunFam" id="2.60.40.10:FF:002441">
    <property type="entry name" value="Twitchin"/>
    <property type="match status" value="1"/>
</dbReference>
<dbReference type="FunFam" id="3.30.200.20:FF:000249">
    <property type="entry name" value="twitchin isoform X2"/>
    <property type="match status" value="1"/>
</dbReference>
<dbReference type="FunFam" id="2.60.40.10:FF:000056">
    <property type="entry name" value="twitchin isoform X4"/>
    <property type="match status" value="11"/>
</dbReference>
<dbReference type="FunFam" id="2.60.40.10:FF:000831">
    <property type="entry name" value="Uncharacterized protein, isoform F"/>
    <property type="match status" value="1"/>
</dbReference>
<dbReference type="FunFam" id="2.60.40.10:FF:000567">
    <property type="entry name" value="Uncharacterized protein, isoform G"/>
    <property type="match status" value="3"/>
</dbReference>
<dbReference type="FunFam" id="2.60.40.10:FF:000051">
    <property type="entry name" value="Uncharacterized protein, isoform J"/>
    <property type="match status" value="3"/>
</dbReference>
<dbReference type="Gene3D" id="2.60.40.10">
    <property type="entry name" value="Immunoglobulins"/>
    <property type="match status" value="61"/>
</dbReference>
<dbReference type="Gene3D" id="3.30.200.20">
    <property type="entry name" value="Phosphorylase Kinase, domain 1"/>
    <property type="match status" value="1"/>
</dbReference>
<dbReference type="Gene3D" id="1.10.510.10">
    <property type="entry name" value="Transferase(Phosphotransferase) domain 1"/>
    <property type="match status" value="1"/>
</dbReference>
<dbReference type="InterPro" id="IPR003961">
    <property type="entry name" value="FN3_dom"/>
</dbReference>
<dbReference type="InterPro" id="IPR036116">
    <property type="entry name" value="FN3_sf"/>
</dbReference>
<dbReference type="InterPro" id="IPR007110">
    <property type="entry name" value="Ig-like_dom"/>
</dbReference>
<dbReference type="InterPro" id="IPR036179">
    <property type="entry name" value="Ig-like_dom_sf"/>
</dbReference>
<dbReference type="InterPro" id="IPR013783">
    <property type="entry name" value="Ig-like_fold"/>
</dbReference>
<dbReference type="InterPro" id="IPR013098">
    <property type="entry name" value="Ig_I-set"/>
</dbReference>
<dbReference type="InterPro" id="IPR003599">
    <property type="entry name" value="Ig_sub"/>
</dbReference>
<dbReference type="InterPro" id="IPR003598">
    <property type="entry name" value="Ig_sub2"/>
</dbReference>
<dbReference type="InterPro" id="IPR011009">
    <property type="entry name" value="Kinase-like_dom_sf"/>
</dbReference>
<dbReference type="InterPro" id="IPR000719">
    <property type="entry name" value="Prot_kinase_dom"/>
</dbReference>
<dbReference type="InterPro" id="IPR017441">
    <property type="entry name" value="Protein_kinase_ATP_BS"/>
</dbReference>
<dbReference type="InterPro" id="IPR008271">
    <property type="entry name" value="Ser/Thr_kinase_AS"/>
</dbReference>
<dbReference type="InterPro" id="IPR050964">
    <property type="entry name" value="Striated_Muscle_Regulatory"/>
</dbReference>
<dbReference type="PANTHER" id="PTHR13817">
    <property type="entry name" value="TITIN"/>
    <property type="match status" value="1"/>
</dbReference>
<dbReference type="PANTHER" id="PTHR13817:SF151">
    <property type="entry name" value="TITIN"/>
    <property type="match status" value="1"/>
</dbReference>
<dbReference type="Pfam" id="PF00041">
    <property type="entry name" value="fn3"/>
    <property type="match status" value="31"/>
</dbReference>
<dbReference type="Pfam" id="PF07679">
    <property type="entry name" value="I-set"/>
    <property type="match status" value="27"/>
</dbReference>
<dbReference type="Pfam" id="PF00069">
    <property type="entry name" value="Pkinase"/>
    <property type="match status" value="1"/>
</dbReference>
<dbReference type="PRINTS" id="PR00014">
    <property type="entry name" value="FNTYPEIII"/>
</dbReference>
<dbReference type="SMART" id="SM00060">
    <property type="entry name" value="FN3"/>
    <property type="match status" value="32"/>
</dbReference>
<dbReference type="SMART" id="SM00409">
    <property type="entry name" value="IG"/>
    <property type="match status" value="30"/>
</dbReference>
<dbReference type="SMART" id="SM00408">
    <property type="entry name" value="IGc2"/>
    <property type="match status" value="24"/>
</dbReference>
<dbReference type="SMART" id="SM00220">
    <property type="entry name" value="S_TKc"/>
    <property type="match status" value="1"/>
</dbReference>
<dbReference type="SUPFAM" id="SSF49265">
    <property type="entry name" value="Fibronectin type III"/>
    <property type="match status" value="17"/>
</dbReference>
<dbReference type="SUPFAM" id="SSF48726">
    <property type="entry name" value="Immunoglobulin"/>
    <property type="match status" value="30"/>
</dbReference>
<dbReference type="SUPFAM" id="SSF56112">
    <property type="entry name" value="Protein kinase-like (PK-like)"/>
    <property type="match status" value="1"/>
</dbReference>
<dbReference type="PROSITE" id="PS50853">
    <property type="entry name" value="FN3"/>
    <property type="match status" value="31"/>
</dbReference>
<dbReference type="PROSITE" id="PS50835">
    <property type="entry name" value="IG_LIKE"/>
    <property type="match status" value="21"/>
</dbReference>
<dbReference type="PROSITE" id="PS00107">
    <property type="entry name" value="PROTEIN_KINASE_ATP"/>
    <property type="match status" value="1"/>
</dbReference>
<dbReference type="PROSITE" id="PS50011">
    <property type="entry name" value="PROTEIN_KINASE_DOM"/>
    <property type="match status" value="1"/>
</dbReference>
<dbReference type="PROSITE" id="PS00108">
    <property type="entry name" value="PROTEIN_KINASE_ST"/>
    <property type="match status" value="1"/>
</dbReference>
<comment type="function">
    <text evidence="9 10 13">Regulator of muscle contraction and relaxation. Senses mechanical strain that occurs during muscle activity by unfolding in clearly resolvable steps at differing forces (PubMed:18390597, PubMed:7190524). Plays a role in the organization of sarcomeres in body wall muscles (PubMed:25851606).</text>
</comment>
<comment type="catalytic activity">
    <reaction evidence="9">
        <text>L-seryl-[protein] + ATP = O-phospho-L-seryl-[protein] + ADP + H(+)</text>
        <dbReference type="Rhea" id="RHEA:17989"/>
        <dbReference type="Rhea" id="RHEA-COMP:9863"/>
        <dbReference type="Rhea" id="RHEA-COMP:11604"/>
        <dbReference type="ChEBI" id="CHEBI:15378"/>
        <dbReference type="ChEBI" id="CHEBI:29999"/>
        <dbReference type="ChEBI" id="CHEBI:30616"/>
        <dbReference type="ChEBI" id="CHEBI:83421"/>
        <dbReference type="ChEBI" id="CHEBI:456216"/>
        <dbReference type="EC" id="2.7.11.1"/>
    </reaction>
</comment>
<comment type="catalytic activity">
    <reaction evidence="9">
        <text>L-threonyl-[protein] + ATP = O-phospho-L-threonyl-[protein] + ADP + H(+)</text>
        <dbReference type="Rhea" id="RHEA:46608"/>
        <dbReference type="Rhea" id="RHEA-COMP:11060"/>
        <dbReference type="Rhea" id="RHEA-COMP:11605"/>
        <dbReference type="ChEBI" id="CHEBI:15378"/>
        <dbReference type="ChEBI" id="CHEBI:30013"/>
        <dbReference type="ChEBI" id="CHEBI:30616"/>
        <dbReference type="ChEBI" id="CHEBI:61977"/>
        <dbReference type="ChEBI" id="CHEBI:456216"/>
        <dbReference type="EC" id="2.7.11.1"/>
    </reaction>
</comment>
<comment type="cofactor">
    <cofactor evidence="9">
        <name>Mg(2+)</name>
        <dbReference type="ChEBI" id="CHEBI:18420"/>
    </cofactor>
</comment>
<comment type="activity regulation">
    <text evidence="9 14">Forces generated by the contraction/relaxation cycles of muscle activity separate the regulatory domain from the catalytic core, activating the enzyme. At rest, the kinase domain is in a closed conformation. The active site is occupied by the autoinhibitory region (CDR), which makes extensive contact with the catalytic site, blocking substrate binding. At low forces the regulatory tail will unravel reversibly and expose the active site to its substrates, potentially stabilized by binding of Ca/CALM. At high forces the kinase begins to unfold and the integrity of the active site is disrupted.</text>
</comment>
<comment type="subunit">
    <text evidence="10">May interact (via protein kinase and CRD domains) with mak-1 (via protein kinase domain).</text>
</comment>
<comment type="subcellular location">
    <subcellularLocation>
        <location evidence="10 12">Cytoplasm</location>
        <location evidence="10 12">Myofibril</location>
        <location evidence="10 12">Sarcomere</location>
    </subcellularLocation>
    <subcellularLocation>
        <location evidence="10 12">Cytoplasm</location>
        <location evidence="10 12">Myofibril</location>
        <location evidence="10 12">Sarcomere</location>
        <location evidence="10 12">A band</location>
    </subcellularLocation>
    <text evidence="10 12">Expressed at the outer edge of A-bands.</text>
</comment>
<comment type="alternative products">
    <event type="alternative splicing"/>
    <isoform>
        <id>Q23551-1</id>
        <name evidence="16">b</name>
        <sequence type="displayed"/>
    </isoform>
    <isoform>
        <id>Q23551-2</id>
        <name evidence="11 15 16">a</name>
        <sequence type="described" ref="VSP_040609 VSP_040611"/>
    </isoform>
    <isoform>
        <id>Q23551-3</id>
        <name evidence="16">c</name>
        <sequence type="described" ref="VSP_040606 VSP_040607"/>
    </isoform>
    <isoform>
        <id>Q23551-4</id>
        <name evidence="16">d</name>
        <sequence type="described" ref="VSP_040608 VSP_040611"/>
    </isoform>
    <isoform>
        <id>Q23551-5</id>
        <name evidence="16">e</name>
        <sequence type="described" ref="VSP_040605 VSP_040611"/>
    </isoform>
</comment>
<comment type="tissue specificity">
    <text evidence="10 12">Expressed in body wall, anal, vulval, and pharyngeal muscles (at protein level).</text>
</comment>
<comment type="PTM">
    <text evidence="10">Phosphorylated by mak-1 on the protein kinase domain and/or CDR domain in vitro.</text>
</comment>
<comment type="disruption phenotype">
    <text evidence="8 10 13">Body muscles are unable to develop or sustain normal contractions but small regions within the myofilament lattice of individual muscle cells contract transiently in the absence of contraction of the adjacent lattice (PubMed:16765996, PubMed:7190524). This results in a nearly constant body twitching phenotype (PubMed:16765996, PubMed:25851606, PubMed:7190524). Resistant to nicotine-induced paralysis (PubMed:25851606).</text>
</comment>
<comment type="miscellaneous">
    <text evidence="8">Determination of the mutation frequency of the unc-22 gene has been used to study the biological effects of short duration spaceflight.</text>
</comment>
<comment type="similarity">
    <text evidence="2">Belongs to the protein kinase superfamily. CAMK Ser/Thr protein kinase family.</text>
</comment>
<comment type="sequence caution" evidence="21">
    <conflict type="erroneous gene model prediction">
        <sequence resource="EMBL-CDS" id="CAA33463"/>
    </conflict>
</comment>
<name>UNC22_CAEEL</name>
<keyword id="KW-0002">3D-structure</keyword>
<keyword id="KW-0025">Alternative splicing</keyword>
<keyword id="KW-0067">ATP-binding</keyword>
<keyword id="KW-0106">Calcium</keyword>
<keyword id="KW-0112">Calmodulin-binding</keyword>
<keyword id="KW-0963">Cytoplasm</keyword>
<keyword id="KW-1015">Disulfide bond</keyword>
<keyword id="KW-0393">Immunoglobulin domain</keyword>
<keyword id="KW-0880">Kelch repeat</keyword>
<keyword id="KW-0418">Kinase</keyword>
<keyword id="KW-0460">Magnesium</keyword>
<keyword id="KW-0479">Metal-binding</keyword>
<keyword id="KW-0547">Nucleotide-binding</keyword>
<keyword id="KW-0597">Phosphoprotein</keyword>
<keyword id="KW-1185">Reference proteome</keyword>
<keyword id="KW-0677">Repeat</keyword>
<keyword id="KW-0723">Serine/threonine-protein kinase</keyword>
<keyword id="KW-0808">Transferase</keyword>
<sequence>MVGAPRFTQKPSIQQTPTGDLLMECHLEADPQPTIAWQHSGNLLEPSGRVVQTLTPLGGSLYKATLVIKEPNAGDGGAYKCTARNQLGESNANINLNFAGAGGDEAKSRGPSFVGKPRIIPKDGGALIVMECKVKSASTPVAKWMKDGVPLSMGGLYHAIFSDLGDQTYLCQLEIRGPSSSDAGQYRCNIRNDQGETNANLALNFEEPDPSERQERKRSTASPRPSSRGPGSRPSSPKKSMKSREGTPKRTLKPREGSPSKKLRSRTSTPVNEEVSQSESRRSSRTDKMEVDQVSGASKRKPDGLPPPGGDEKKLRAGSPSTRKSPSRKSASPTPSRKGSSAGGAASGTTGASASATSATSGGSASSDASRDKYTRPPIVLEASRSQTGRIGGSVVLEVQWQCHSSTIIEWYRDGTLVRNSSEYSQSFNGSIAKLQVNKLTEEKSGLYKCHAKCDYGEGQSSAMVKIEQSDVEEELMKHRKDAEDEYQKEEQKSQTLQAETKKRVARRSKSKSKSPAPQAKKSTTSESGRQEASEVEHKRSSSVRPDPDEESQLDEIPSSGLTIPEERRRELLGQVGESDDEVSESISELPSFAGGKPRRKTDSPPKQDDMFSRDTLLRKTTTSTKNESSTVEEKTKLRKTVKKVDGELDFKAMVKLKKVKKEEGGTTEKSGFPLDHADSTSSVLSQESRSRRGSNAPFAKDGLPEQPANPFAQLKKVKSGAGGLEKSDSMASLKKLDLKKGKIDDNSDGAFKVQLKKVVKKEVKESTISVKEKNGTESGIKTEFKMEKRERTTLQKYEKTDSDGSKKEDKPKKVSIAPVSTNKSSDDEPSTPRHHKEVEEKSTSEELKAKVAGRQVGQKRNGAQKPEEPKNLLSQIQLKKVTKKAHDDTNELEGIKLKKVTTVPKHVADDDSQSESESRRGSVFGELRRGSRAPRDSADNSRRDSIRRSSIDMRRESVQEILEKTSTPLVPSGASGSAPKIVEVPENVTVVENETAILTCKVSGSPAPTFRWFKGSREVISGGRFKHITDGKEHTVALALLKCRSQDEGPYTLTIENVHGTDSADVKLLVTSDNGLDFRAMLKHRESQAGFQKDGEGGGAGGGGGEKKPMTEAERRQSLFPGKKVEKWDIPLPEKTVQQQVDKICEWKCTYSRPNAKIRWYKDRKEIFSGGLKYKIVIEKNVCTLIINNPEVDDTGKYTCEANGVPTHAQLTVLEPPMKYSFLNPLPNTQEIYRTKQAVLTCKVNTPRAPLVWYRGSKAIQEGDPRFIIEKDAVGRCTLTIKEVEEDDQAEWTARITQDVFSKVQVYVEEPRHTFVVPMKSQKVNESDLATLETDVNDKDAEVVWWHDGKRIDIDGVKFKVESSNRKRRLIINGARIEDHGEYKCTTKDDRTMAQLIVDAKNKFIVALKDTEVIEKDDVTLMCQTKDTKTPGIWFRNGKQISSMPGGKFETQSRNGTHTLKIGKIEMNEADVYEIDQAGLRGSCNVTVLEAEKRPILNWKPKKIEAKAGEPCVVKVPFQIKGTRRGDPKAQILKNGKPIDEEMRKLVEVIIKDDVAEIVFKNPQLADTGKWALELGNSAGTALAPFELFVKDKPKPPKGPLETKNVTAEGLDLVWGTPDPDEGAPVKAYIIEMQEGRSGNWAKVGETKGTDFKVKDLKEHGEYKFRVKALNECGLSDPLTGESVLAKNPYGVPGKPKNMDAIDVDKDHCTLAWEPPEEDGGAPITGYIIERREKSEKDWHQVGQTKPDCCELTDKKVVEDKEYLYRVKAVNKAGPGDPCDHGKPIKMKAKKASPEFTGGGIKDLRLKVGETIKYDVPISGEPLPECLWVVNGKPLKAVGRVKMSSERGKHIMKIENAVRADSGKFTITLKNSSGSCDSTATVTVVGRPTPPKGPLDIADVCADGATLSWNPPDDDGGDPLTGYIVEAQDMDNKGKYIEVGKVDPNTTTLKVNGLRNKGNYKFRVKAVNNEGESEPLSADQYTQIKDPWDEPGKPGRPEITDFDADRIDIAWEPPHKDGGAPIEEYIVEVRDPDTKEWKEVKRVPDTNASISGLKEGKEYQFRVRAVNKAGPGQPSEPSEKQLAKPKFIPAWLKHDNLKSITVKAGATVRWEVKIGGEPIPEVKWFKGNQQLENGIQLTIDTRKNEHTILCIPSAMRSDVGEYRLTVKNSHGADEEKANLTVLDRPSKPNGPLEVSDVFEDNLNLSWKPPDDDGGEPIEYYEVEKLDTATGRWVPCAKVKDTKAHIDGLKKGQTYQFRVKAVNKEGASDALSTDKDTKAKNPYDEPGKTGTPDVVDWDADRVSLEWEPPKSDGGAPITQYVIEKKGKHGRDWQECGKVSGDQTNAEILGLKEGEEYQFRVKAVNKAGPGEASDPSRKVVAKPRNLKPWIDREAMKTITIKVGNDVEFDVPVRGEPPPKKEWIFNEKPVDDQKIRIESEDYKTRFVLRGATRKHAGLYTLTATNASGSDKHSVEVIVLGKPSSPLGPLEVSNVYEDRADLEWKVPEDDGGAPIDHYEIEKMDLATGRWVPCGRSETTKTTVPNLQPGHEYKFRVRAVNKEGESDPLTTNTAILAKNPYEVPGKVDKPELVDWDKDHVDLAWNAPDDGGAPIEAFVIEKKDKNGRWEEALVVPGDQKTATVPNLKEGEEYQFRISARNKAGTGDPSDPSDRVVAKPRNLAPRIHREDLSDTTVKVGATLKFIVHIDGEPAPDVTWSFNGKGIGESKAQIENEPYISRFALPKALRKQSGKYTITATNINGTDSVTINIKVKSKPTKPKGPIEVTDVFEDRATLDWKPPEDDGGEPIEFYEIEKMNTKDGIWVPCGRSGDTHFTVDSLNKGDHYKFRVKAVNSEGPSDPLETETDILAKNPFDRPDRPGRPEPTDWDSDHVDLKWDPPLSDGGAPIEEYQIEKRTKYGRWEPAITVPGGQTTATVPDLTPNEEYEFRVVAVNKGGPSDPSDASKAVIAKPRNLKPHIDRDALKNLTIKAGQSISFDVPVSGEPAPTVTWHWPDNREIRNGGRVKLDNPEYQSKLVVKQMERGDSGTFTIKAVNANGEDEATVKINVIDKPTSPNGPLDVSDVHGDHVTLNWRAPDDDGGIPIENYVIEKYDTASGRWVPAAKVAGDKTTAVVDGLIPGHEYKFRVAAVNAEGESDPLETFGTTLAKDPFDKPGKTNAPEITDWDKDHVDLEWKPPANDGGAPIEEYVVEMKDEFSPFWNDVAHVPAGQTNATVGNLKEGSKYEFRIRAKNKAGLGDPSDSASAVAKARNVPPVIDRNSIQEIKVKAGQDFSLNIPVSGEPTPTITWTFEGTPVESDDRMKLNNEDGKTKFHVKRALRSDTGTYIIKAENENGTDTAEVKVTVLDHPSSPRGPLDVTNIVKDGCDLAWKEPEDDGGAEISHYVIEKQDAATGRWTACGESKDTNFHVDDLTQGHEYKFRVKAVNRHGDSDPLEAREAIIAKDPFDRADKPGTPEIVDWDKDHADLKWTPPADDGGAPIEGYLVEMRTPSGDWVPAVTVGAGELTATVDGLKPGQTYQFRVKALNKAGESTPSDPSRTMVAKPRHLAPKINRDMFVAQRVKAGQTLNFDVNVEGEPAPKIEWFLNGSPLSSGGNTHIDNNTDNNTKLTTKSTARADSGKYKIVATNESGKDEHEVDVNILDIPGAPEGPLRHKDITKESVVLKWDEPLDDGGSPITNYVVEKQEDGGRWVPCGETSDTSLKVNKLSEGHEYKFRVKAVNRQGTSAPLTSDHAIVAKNPFDEPDAPTDVTPVDWDKDHVDLEWKPPANDGGAPIDAYIVEKKDKFGDWVECARVDGKTTKATADNLTPGETYQFRVKAVNKAGPGKPSDPTGNVVAKPRRMAPKLNLAGLLDLRIKAGTPIKLDIAFEGEPAPVAKWKANDATIDTGARADVTNTPTSSAIHIFSAVRGDTGVYKIIVENEHGKDTAQCNVTVLDVPGTPEGPLKIDEIHKEGCTLNWKPPTDNGGTDVLHYIVEKMDTSRGTWQEVGTFPDCTAKVNKLVPGKEYAFRVKAVNLQGESKPLEAEEPIIAKNQFDVPDPVDKPEVTDWDKDRIDIKWNPTANNGGAPVTGYIVEKKEKGSAIWTEAGKTPGTTFSADNLKPGVEYEFRVIAVNAAGPSDPSDPTDPQITKARYLKPKILTASRKIKIKAGFTHNLEVDFIGAPDPTATWTVGDSGAALAPELLVDAKSSTTSIFFPSAKRADSGNYKLKVKNELGEDEAIFEVIVQDRPSAPEGPLEVSDVTKDSCVLNWKPPKDDGGAEISNYVVEKRDTKTNTWVPVSAFVTGTSITVPKLTEGHEYEFRVMAENTFGRSDSLNTDEPVLAKDPFGTPGKPGRPEIVDTDNDHIDIKWDPPRDNGGSPVDHYDIERKDAKTGRWIKVNTSPVQGTAFSDTRVQKGHTYEYRVVAVNKAGPGQPSDSSAAATAKPMHEAPKFDLDLDGKEFRVKAGEPLVITIPFTASPQPDISWTKEGGKPLAGVETTDSQTKLVIPSTRRSDSGPVKIKAVNPYGEAEANIKITVIDKPGAPENITYPAVSRHTCTLNWDAPKDDGGAEIAGYKIEYQEVGSQIWDKVPGLISGTAYTVRGLEHGQQYRFRIRAENAVGLSDYCQGVPVVIKDPFDPPGAPSTPEITGYDTNQVSLAWNPPRDDGGSPILGYVVERFEKRGGGDWAPVKMPMVKGTECIVPGLHENETYQFRVRAVNAAGHGEPSNGSEPVTCRPYVEKPGAPDAPRVGKITKNSAELTWNRPLRDGGAPIDGYIVEKKKLGDNDWTRCNDKPVRDTAFEVKNLGEKEEYEFRVIAVNSAGEGEPSKPSDLVLIEEQPGRPIFDINNLKDITVRAGETIQIRIPYAGGNPKPIIDLFNGNSPIFENERTVVDVNPGEIVITTTGSKRSDAGPYKISATNKYGKDTCKLNVFVLDAPGKPTGPIRATDIQADAMTLSWRPPKDNGGDAITNYVVEKRTPGGDWVTVGHPVGTTLRVRNLDANTPYEFRVRAENQYGVGEPLETDDAIVAKNPFDTPGAPGQPEAVETSEEAITLQWTRPTSDGGAPIQGYVIEKREVGSTEWTKAAFGNILDTKHRVTGLTPKKTYEFRVAAYNAAGQGEYSVNSVPITADNAPTRPKINMGMLTRDILAYAGERAKILVPFAASPAPKVTFSKGENKISPTDPRVKVEYSDFLATLTIEKSELTDGGLYFVELENSQGSDSASIRLKVVDKPASPQHIRVEDIAPDCCTLYWMPPSSDGGSPITNYIVEKLDLRHSDGKWEKVSSFVRNLNYTVGGLIKDNRYRFRVRAETQYGVSEPCELADVVVAKYQFEVPNQPEAPTVRDKDSTWAELEWDPPRDGGSKIIGYQVQYRDTSSGRWINAKMDLSEQCHARVTGLRQNGEFEFRIIAKNAAGFSKPSPPSERCQLKSRFGPPGPPIHVGAKSIGRNHCTITWMAPLEDGGSKITGYNVEIREYGSTLWTVASDYNVREPEFTVDKLREFNDYEFRVVAINAAGKGIPSLPSGPIKIQESGGSRPQIVVKPEDTAQPYNRRAVFTCEAVGRPEPTARWLRNGRELPESSRYRFEASDGVYKFTIKEVWDIDAGEYTVEVSNPYGSDTATANLVVQAPPVIEKDVPNTILPSGDLVRLKIYFSGTAPFRHSLVLNREEIDMDHPTIRIVEFDDHILITIPALSVREAGRYEYTVSNDSGEATTGFWLNVTGLPEAPQGPLHISNIGPSTATLSWRPPVTDGGSKITSYVVEKRDLSKDEWVTVTSNVKDMNYIVTGLFENHEYEFRVSAQNENGIGAPLVSEHPIIARLPFDPPTSPLNLEIVQVGGDYVTLSWQRPLSDGGGRLRGYIVEKQEEEHDEWFRCNQNPSPPNNYNVPNLIDGRKYRYRVFAVNDAGLSDLAELDQTLFQASGSGEGPKIVSPLSDLNEEVGRCVTFECEISGSPRPEYRWFKGCKELVDTSKYTLINKGDKQVLIINDLTSDDADEYTCRATNSSGTRSTRANLRIKTKPRVFIPPKYHGGYEAQKGETIELKIPYKAYPQGEARWTKDGEKIENNSKFSITTDDKFATLRISNASREDYGEYRVVVENSVGSDSGTVNVTVADVPEPPRFPIIENILDEAVILSWKPPALDGGSLVTNYTIEKREAMGGSWSPCAKSRYTYTTIEGLRAGKQYEFRIIAENKHGQSKPCEPTAPVLIPGDERKRRRGYDVDEQGKIVRGKGTVSSNYDNYVFDIWKQYYPQPVEIKHDHVLDHYDIHEELGTGAFGVVHRVTERATGNNFAAKFVMTPHESDKETVRKEIQTMSVLRHPTLVNLHDAFEDDNEMVMIYEFMSGGELFEKVADEHNKMSEDEAVEYMRQVCKGLCHMHENNYVHLDLKPENIMFTTKRSNELKLIDFGLTAHLDPKQSVKVTTGTAEFAAPEVAEGKPVGYYTDMWSVGVLSYILLSGLSPFGGENDDETLRNVKSCDWNMDDSAFSGISEDGKDFIRKLLLADPNTRMTIHQALEHPWLTPGNAPGRDSQIPSSRYTKIRDSIKTKYDAWPEPLPPLGRISNYSSLRKHRPQEYSIRDAFWDRSEAQPRFIVKPYGTEVGEGQSANFYCRVIASSPPVVTWHKDDRELKQSVKYMKRYNGNDYGLTINRVKGDDKGEYTVRAKNSYGTKEEIVFLNVTRHSEPLKFEPLEPMKKAPSPPRVEEFKERRSAPFFTFHLRNRLIQKNHQCKLTCSLQGNPNPTIEWMKDGHPVDEDRVQVSFRSGVCSLEIFNARVDDAGTYTVTATNDLGVDVSECVLTVQTKGGEPIPRVSSFRPRRAYDTLSTGTDVERSHSYADMRRRSLIRDVSPDVRSAADDLKTKITNELPSFTAQLSDSETEVGGSAEFSAAVSGQPEPLIEWLHNGERISESDSRFRASYVAGKATLRISDAKKSDEGQYLCRASNSAGQEQTRATLTVKGDQPLLNGHAGQAVESELRVTKHLGGEIVNNGESVTFEARVQGTPEEVLWMRNGQELTNGDKTSISQDGETLSFTINSADASDAGHYQLEVRSKGTNLVSVASLVVVGEKADPPVTRLPSSVSAPLGGSTAFTIEFENVEGLTVQWFRGSEKIEKNERVKSVKTGNTFKLDIKNVEQDDDGIYVAKVVKEKKAIAKYAAALLLV</sequence>
<reference evidence="22" key="1">
    <citation type="journal article" date="1989" name="Nature">
        <title>Sequence of an unusually large protein implicated in regulation of myosin activity in C. elegans.</title>
        <authorList>
            <person name="Benian G.M."/>
            <person name="Kiff J.E."/>
            <person name="Neckelmann N."/>
            <person name="Moerman D.G."/>
            <person name="Waterston R.H."/>
        </authorList>
    </citation>
    <scope>NUCLEOTIDE SEQUENCE [GENOMIC DNA]</scope>
    <source>
        <strain evidence="22">Bristol N2</strain>
    </source>
</reference>
<reference evidence="21" key="2">
    <citation type="journal article" date="1993" name="Genetics">
        <title>Additional sequence complexity in the muscle gene, unc-22, and its encoded protein, twitchin, of Caenorhabditis elegans.</title>
        <authorList>
            <person name="Benian G.M."/>
            <person name="L'Hernault S.W."/>
            <person name="Morris M.E."/>
        </authorList>
    </citation>
    <scope>SEQUENCE REVISION TO N-TERMINUS</scope>
    <source>
        <strain evidence="15">Bristol N2</strain>
    </source>
</reference>
<reference evidence="21 23" key="3">
    <citation type="journal article" date="1998" name="Science">
        <title>Genome sequence of the nematode C. elegans: a platform for investigating biology.</title>
        <authorList>
            <consortium name="The C. elegans sequencing consortium"/>
        </authorList>
    </citation>
    <scope>NUCLEOTIDE SEQUENCE [LARGE SCALE GENOMIC DNA]</scope>
    <scope>ALTERNATIVE SPLICING</scope>
    <source>
        <strain evidence="23">Bristol N2</strain>
    </source>
</reference>
<reference evidence="21" key="4">
    <citation type="journal article" date="1980" name="Dev. Biol.">
        <title>Mutants with altered muscle structure of Caenorhabditis elegans.</title>
        <authorList>
            <person name="Waterston R.H."/>
            <person name="Thomson J.N."/>
            <person name="Brenner S."/>
        </authorList>
    </citation>
    <scope>FUNCTION</scope>
    <scope>DISRUPTION PHENOTYPE</scope>
</reference>
<reference evidence="21" key="5">
    <citation type="journal article" date="1988" name="Genes Dev.">
        <title>Identification and intracellular localization of the unc-22 gene product of Caenorhabditis elegans.</title>
        <authorList>
            <person name="Moerman D.G."/>
            <person name="Benian G.M."/>
            <person name="Barstead R.J."/>
            <person name="Schriefer L.A."/>
            <person name="Waterston R.H."/>
        </authorList>
    </citation>
    <scope>SUBCELLULAR LOCATION</scope>
    <scope>TISSUE SPECIFICITY</scope>
</reference>
<reference evidence="21" key="6">
    <citation type="journal article" date="2006" name="Mutat. Res.">
        <title>A mutational analysis of Caenorhabditis elegans in space.</title>
        <authorList>
            <person name="Zhao Y."/>
            <person name="Lai K."/>
            <person name="Cheung I."/>
            <person name="Youds J."/>
            <person name="Tarailo M."/>
            <person name="Tarailo S."/>
            <person name="Rose A."/>
        </authorList>
    </citation>
    <scope>DISRUPTION PHENOTYPE</scope>
</reference>
<reference evidence="21" key="7">
    <citation type="journal article" date="2008" name="Biophys. J.">
        <title>Single-molecule force spectroscopy reveals a stepwise unfolding of Caenorhabditis elegans giant protein kinase domains.</title>
        <authorList>
            <person name="Greene D.N."/>
            <person name="Garcia T."/>
            <person name="Sutton R.B."/>
            <person name="Gernert K.M."/>
            <person name="Benian G.M."/>
            <person name="Oberhauser A.F."/>
        </authorList>
    </citation>
    <scope>FUNCTION</scope>
    <scope>CATALYTIC ACTIVITY</scope>
    <scope>COFACTOR</scope>
    <scope>ACTIVITY REGULATION</scope>
</reference>
<reference key="8">
    <citation type="journal article" date="2015" name="Mol. Biol. Cell">
        <title>Twitchin kinase interacts with MAPKAP kinase 2 in Caenorhabditis elegans striated muscle.</title>
        <authorList>
            <person name="Matsunaga Y."/>
            <person name="Qadota H."/>
            <person name="Furukawa M."/>
            <person name="Choe H.H."/>
            <person name="Benian G.M."/>
        </authorList>
    </citation>
    <scope>FUNCTION</scope>
    <scope>INTERACTION WITH MAK-1</scope>
    <scope>SUBCELLULAR LOCATION</scope>
    <scope>TISSUE SPECIFICITY</scope>
    <scope>PHOSPHORYLATION</scope>
    <scope>DISRUPTION PHENOTYPE</scope>
</reference>
<reference key="9">
    <citation type="journal article" date="1994" name="Nature">
        <title>Insights into autoregulation from the crystal structure of twitchin kinase.</title>
        <authorList>
            <person name="Hu S.H."/>
            <person name="Parker M.W."/>
            <person name="Lei J.Y."/>
            <person name="Wilce M.C."/>
            <person name="Benian G.M."/>
            <person name="Kemp B.E."/>
        </authorList>
    </citation>
    <scope>X-RAY CRYSTALLOGRAPHY (3.3 ANGSTROMS) OF 6211-6699</scope>
    <scope>ACTIVITY REGULATION</scope>
    <scope>REGION</scope>
</reference>
<reference key="10">
    <citation type="journal article" date="1996" name="J. Mol. Biol.">
        <title>Structure and stability of an immunoglobulin superfamily domain from twitchin, a muscle protein of the nematode Caenorhabditis elegans.</title>
        <authorList>
            <person name="Fong S."/>
            <person name="Hamill S.J."/>
            <person name="Proctor M."/>
            <person name="Freund S.M."/>
            <person name="Benian G.M."/>
            <person name="Chothia C."/>
            <person name="Bycroft M."/>
            <person name="Clarke J."/>
        </authorList>
    </citation>
    <scope>STRUCTURE BY NMR OF 4148-4240</scope>
</reference>